<organism>
    <name type="scientific">Paracidovorax citrulli (strain AAC00-1)</name>
    <name type="common">Acidovorax citrulli</name>
    <dbReference type="NCBI Taxonomy" id="397945"/>
    <lineage>
        <taxon>Bacteria</taxon>
        <taxon>Pseudomonadati</taxon>
        <taxon>Pseudomonadota</taxon>
        <taxon>Betaproteobacteria</taxon>
        <taxon>Burkholderiales</taxon>
        <taxon>Comamonadaceae</taxon>
        <taxon>Paracidovorax</taxon>
    </lineage>
</organism>
<evidence type="ECO:0000255" key="1">
    <source>
        <dbReference type="HAMAP-Rule" id="MF_00563"/>
    </source>
</evidence>
<protein>
    <recommendedName>
        <fullName evidence="1">Adenosylhomocysteinase</fullName>
        <ecNumber evidence="1">3.13.2.1</ecNumber>
    </recommendedName>
    <alternativeName>
        <fullName evidence="1">S-adenosyl-L-homocysteine hydrolase</fullName>
        <shortName evidence="1">AdoHcyase</shortName>
    </alternativeName>
</protein>
<name>SAHH_PARC0</name>
<reference key="1">
    <citation type="submission" date="2006-12" db="EMBL/GenBank/DDBJ databases">
        <title>Complete sequence of Acidovorax avenae subsp. citrulli AAC00-1.</title>
        <authorList>
            <person name="Copeland A."/>
            <person name="Lucas S."/>
            <person name="Lapidus A."/>
            <person name="Barry K."/>
            <person name="Detter J.C."/>
            <person name="Glavina del Rio T."/>
            <person name="Dalin E."/>
            <person name="Tice H."/>
            <person name="Pitluck S."/>
            <person name="Kiss H."/>
            <person name="Brettin T."/>
            <person name="Bruce D."/>
            <person name="Han C."/>
            <person name="Tapia R."/>
            <person name="Gilna P."/>
            <person name="Schmutz J."/>
            <person name="Larimer F."/>
            <person name="Land M."/>
            <person name="Hauser L."/>
            <person name="Kyrpides N."/>
            <person name="Kim E."/>
            <person name="Stahl D."/>
            <person name="Richardson P."/>
        </authorList>
    </citation>
    <scope>NUCLEOTIDE SEQUENCE [LARGE SCALE GENOMIC DNA]</scope>
    <source>
        <strain>AAC00-1</strain>
    </source>
</reference>
<accession>A1TUG3</accession>
<gene>
    <name evidence="1" type="primary">ahcY</name>
    <name type="ordered locus">Aave_4060</name>
</gene>
<proteinExistence type="inferred from homology"/>
<keyword id="KW-0963">Cytoplasm</keyword>
<keyword id="KW-0378">Hydrolase</keyword>
<keyword id="KW-0520">NAD</keyword>
<keyword id="KW-0554">One-carbon metabolism</keyword>
<comment type="function">
    <text evidence="1">May play a key role in the regulation of the intracellular concentration of adenosylhomocysteine.</text>
</comment>
<comment type="catalytic activity">
    <reaction evidence="1">
        <text>S-adenosyl-L-homocysteine + H2O = L-homocysteine + adenosine</text>
        <dbReference type="Rhea" id="RHEA:21708"/>
        <dbReference type="ChEBI" id="CHEBI:15377"/>
        <dbReference type="ChEBI" id="CHEBI:16335"/>
        <dbReference type="ChEBI" id="CHEBI:57856"/>
        <dbReference type="ChEBI" id="CHEBI:58199"/>
        <dbReference type="EC" id="3.13.2.1"/>
    </reaction>
</comment>
<comment type="cofactor">
    <cofactor evidence="1">
        <name>NAD(+)</name>
        <dbReference type="ChEBI" id="CHEBI:57540"/>
    </cofactor>
    <text evidence="1">Binds 1 NAD(+) per subunit.</text>
</comment>
<comment type="pathway">
    <text evidence="1">Amino-acid biosynthesis; L-homocysteine biosynthesis; L-homocysteine from S-adenosyl-L-homocysteine: step 1/1.</text>
</comment>
<comment type="subcellular location">
    <subcellularLocation>
        <location evidence="1">Cytoplasm</location>
    </subcellularLocation>
</comment>
<comment type="similarity">
    <text evidence="1">Belongs to the adenosylhomocysteinase family.</text>
</comment>
<sequence length="475" mass="51692">MSAVLKPQADLAIADISLADWGRKEIKIAETEMPGLMAIREEFAAAQPLKGARITGSLHMTIQTAVLIETLKALGADVRWASCNIFSTQDHAAAAIAAGGTPVFAIKGESLEDYWDYTHRIFDFGAKGTPGEGPNMILDDGGDATLLMHLGQRAEKDLSVVANPTSEEERILFAAIKAKIAQDPTWYTRKSAEIIGVTEETTTGVHRLNEMSAKGTLLFRAINVNDSVTKSKFDNLYGCRESLVDGIKRATDVMIAGKVALVAGYGDVGKGCAQALAALRAQVWVTEIDPINALQAAMEGYKVVTMEYAADKADIFVTTTGNKDVIRHEHMVAMKNEAIVCNIGHFDNEIDVASIEKYRWEEVKPQVDHVIFPDGKRITLLAKGRLVNLGCATGHPSFVMSSSFANQTIAQIELFTKPDAYQAGKVYVLPKVLDEKVARLHLKKVGAQLTELTDAQAAYIGVKKEGPYKADTYRY</sequence>
<feature type="chain" id="PRO_1000212051" description="Adenosylhomocysteinase">
    <location>
        <begin position="1"/>
        <end position="475"/>
    </location>
</feature>
<feature type="binding site" evidence="1">
    <location>
        <position position="61"/>
    </location>
    <ligand>
        <name>substrate</name>
    </ligand>
</feature>
<feature type="binding site" evidence="1">
    <location>
        <position position="140"/>
    </location>
    <ligand>
        <name>substrate</name>
    </ligand>
</feature>
<feature type="binding site" evidence="1">
    <location>
        <position position="200"/>
    </location>
    <ligand>
        <name>substrate</name>
    </ligand>
</feature>
<feature type="binding site" evidence="1">
    <location>
        <begin position="201"/>
        <end position="203"/>
    </location>
    <ligand>
        <name>NAD(+)</name>
        <dbReference type="ChEBI" id="CHEBI:57540"/>
    </ligand>
</feature>
<feature type="binding site" evidence="1">
    <location>
        <position position="230"/>
    </location>
    <ligand>
        <name>substrate</name>
    </ligand>
</feature>
<feature type="binding site" evidence="1">
    <location>
        <position position="234"/>
    </location>
    <ligand>
        <name>substrate</name>
    </ligand>
</feature>
<feature type="binding site" evidence="1">
    <location>
        <position position="235"/>
    </location>
    <ligand>
        <name>NAD(+)</name>
        <dbReference type="ChEBI" id="CHEBI:57540"/>
    </ligand>
</feature>
<feature type="binding site" evidence="1">
    <location>
        <begin position="264"/>
        <end position="269"/>
    </location>
    <ligand>
        <name>NAD(+)</name>
        <dbReference type="ChEBI" id="CHEBI:57540"/>
    </ligand>
</feature>
<feature type="binding site" evidence="1">
    <location>
        <position position="287"/>
    </location>
    <ligand>
        <name>NAD(+)</name>
        <dbReference type="ChEBI" id="CHEBI:57540"/>
    </ligand>
</feature>
<feature type="binding site" evidence="1">
    <location>
        <position position="322"/>
    </location>
    <ligand>
        <name>NAD(+)</name>
        <dbReference type="ChEBI" id="CHEBI:57540"/>
    </ligand>
</feature>
<feature type="binding site" evidence="1">
    <location>
        <begin position="343"/>
        <end position="345"/>
    </location>
    <ligand>
        <name>NAD(+)</name>
        <dbReference type="ChEBI" id="CHEBI:57540"/>
    </ligand>
</feature>
<feature type="binding site" evidence="1">
    <location>
        <position position="388"/>
    </location>
    <ligand>
        <name>NAD(+)</name>
        <dbReference type="ChEBI" id="CHEBI:57540"/>
    </ligand>
</feature>
<dbReference type="EC" id="3.13.2.1" evidence="1"/>
<dbReference type="EMBL" id="CP000512">
    <property type="protein sequence ID" value="ABM34601.1"/>
    <property type="molecule type" value="Genomic_DNA"/>
</dbReference>
<dbReference type="RefSeq" id="WP_011797087.1">
    <property type="nucleotide sequence ID" value="NC_008752.1"/>
</dbReference>
<dbReference type="SMR" id="A1TUG3"/>
<dbReference type="STRING" id="397945.Aave_4060"/>
<dbReference type="GeneID" id="79789077"/>
<dbReference type="KEGG" id="aav:Aave_4060"/>
<dbReference type="eggNOG" id="COG0499">
    <property type="taxonomic scope" value="Bacteria"/>
</dbReference>
<dbReference type="HOGENOM" id="CLU_025194_2_1_4"/>
<dbReference type="OrthoDB" id="9802717at2"/>
<dbReference type="UniPathway" id="UPA00314">
    <property type="reaction ID" value="UER00076"/>
</dbReference>
<dbReference type="Proteomes" id="UP000002596">
    <property type="component" value="Chromosome"/>
</dbReference>
<dbReference type="GO" id="GO:0005829">
    <property type="term" value="C:cytosol"/>
    <property type="evidence" value="ECO:0007669"/>
    <property type="project" value="TreeGrafter"/>
</dbReference>
<dbReference type="GO" id="GO:0004013">
    <property type="term" value="F:adenosylhomocysteinase activity"/>
    <property type="evidence" value="ECO:0007669"/>
    <property type="project" value="UniProtKB-UniRule"/>
</dbReference>
<dbReference type="GO" id="GO:0071269">
    <property type="term" value="P:L-homocysteine biosynthetic process"/>
    <property type="evidence" value="ECO:0007669"/>
    <property type="project" value="UniProtKB-UniRule"/>
</dbReference>
<dbReference type="GO" id="GO:0006730">
    <property type="term" value="P:one-carbon metabolic process"/>
    <property type="evidence" value="ECO:0007669"/>
    <property type="project" value="UniProtKB-KW"/>
</dbReference>
<dbReference type="GO" id="GO:0033353">
    <property type="term" value="P:S-adenosylmethionine cycle"/>
    <property type="evidence" value="ECO:0007669"/>
    <property type="project" value="TreeGrafter"/>
</dbReference>
<dbReference type="CDD" id="cd00401">
    <property type="entry name" value="SAHH"/>
    <property type="match status" value="1"/>
</dbReference>
<dbReference type="FunFam" id="3.40.50.720:FF:000004">
    <property type="entry name" value="Adenosylhomocysteinase"/>
    <property type="match status" value="1"/>
</dbReference>
<dbReference type="Gene3D" id="3.40.50.1480">
    <property type="entry name" value="Adenosylhomocysteinase-like"/>
    <property type="match status" value="1"/>
</dbReference>
<dbReference type="Gene3D" id="3.40.50.720">
    <property type="entry name" value="NAD(P)-binding Rossmann-like Domain"/>
    <property type="match status" value="1"/>
</dbReference>
<dbReference type="HAMAP" id="MF_00563">
    <property type="entry name" value="AdoHcyase"/>
    <property type="match status" value="1"/>
</dbReference>
<dbReference type="InterPro" id="IPR042172">
    <property type="entry name" value="Adenosylhomocyst_ase-like_sf"/>
</dbReference>
<dbReference type="InterPro" id="IPR000043">
    <property type="entry name" value="Adenosylhomocysteinase-like"/>
</dbReference>
<dbReference type="InterPro" id="IPR015878">
    <property type="entry name" value="Ado_hCys_hydrolase_NAD-bd"/>
</dbReference>
<dbReference type="InterPro" id="IPR036291">
    <property type="entry name" value="NAD(P)-bd_dom_sf"/>
</dbReference>
<dbReference type="InterPro" id="IPR020082">
    <property type="entry name" value="S-Ado-L-homoCys_hydrolase_CS"/>
</dbReference>
<dbReference type="NCBIfam" id="TIGR00936">
    <property type="entry name" value="ahcY"/>
    <property type="match status" value="1"/>
</dbReference>
<dbReference type="NCBIfam" id="NF004005">
    <property type="entry name" value="PRK05476.2-3"/>
    <property type="match status" value="1"/>
</dbReference>
<dbReference type="PANTHER" id="PTHR23420">
    <property type="entry name" value="ADENOSYLHOMOCYSTEINASE"/>
    <property type="match status" value="1"/>
</dbReference>
<dbReference type="PANTHER" id="PTHR23420:SF0">
    <property type="entry name" value="ADENOSYLHOMOCYSTEINASE"/>
    <property type="match status" value="1"/>
</dbReference>
<dbReference type="Pfam" id="PF05221">
    <property type="entry name" value="AdoHcyase"/>
    <property type="match status" value="1"/>
</dbReference>
<dbReference type="Pfam" id="PF00670">
    <property type="entry name" value="AdoHcyase_NAD"/>
    <property type="match status" value="1"/>
</dbReference>
<dbReference type="PIRSF" id="PIRSF001109">
    <property type="entry name" value="Ad_hcy_hydrolase"/>
    <property type="match status" value="1"/>
</dbReference>
<dbReference type="SMART" id="SM00996">
    <property type="entry name" value="AdoHcyase"/>
    <property type="match status" value="1"/>
</dbReference>
<dbReference type="SMART" id="SM00997">
    <property type="entry name" value="AdoHcyase_NAD"/>
    <property type="match status" value="1"/>
</dbReference>
<dbReference type="SUPFAM" id="SSF52283">
    <property type="entry name" value="Formate/glycerate dehydrogenase catalytic domain-like"/>
    <property type="match status" value="1"/>
</dbReference>
<dbReference type="SUPFAM" id="SSF51735">
    <property type="entry name" value="NAD(P)-binding Rossmann-fold domains"/>
    <property type="match status" value="1"/>
</dbReference>
<dbReference type="PROSITE" id="PS00738">
    <property type="entry name" value="ADOHCYASE_1"/>
    <property type="match status" value="1"/>
</dbReference>
<dbReference type="PROSITE" id="PS00739">
    <property type="entry name" value="ADOHCYASE_2"/>
    <property type="match status" value="1"/>
</dbReference>